<feature type="chain" id="PRO_0000161999" description="Uncharacterized RNA methyltransferase LMOf2365_1727">
    <location>
        <begin position="1"/>
        <end position="459"/>
    </location>
</feature>
<feature type="domain" description="TRAM" evidence="2">
    <location>
        <begin position="5"/>
        <end position="63"/>
    </location>
</feature>
<feature type="active site" description="Nucleophile" evidence="3">
    <location>
        <position position="415"/>
    </location>
</feature>
<feature type="binding site" evidence="1">
    <location>
        <position position="76"/>
    </location>
    <ligand>
        <name>[4Fe-4S] cluster</name>
        <dbReference type="ChEBI" id="CHEBI:49883"/>
    </ligand>
</feature>
<feature type="binding site" evidence="1">
    <location>
        <position position="82"/>
    </location>
    <ligand>
        <name>[4Fe-4S] cluster</name>
        <dbReference type="ChEBI" id="CHEBI:49883"/>
    </ligand>
</feature>
<feature type="binding site" evidence="1">
    <location>
        <position position="85"/>
    </location>
    <ligand>
        <name>[4Fe-4S] cluster</name>
        <dbReference type="ChEBI" id="CHEBI:49883"/>
    </ligand>
</feature>
<feature type="binding site" evidence="1">
    <location>
        <position position="166"/>
    </location>
    <ligand>
        <name>[4Fe-4S] cluster</name>
        <dbReference type="ChEBI" id="CHEBI:49883"/>
    </ligand>
</feature>
<feature type="binding site" evidence="3">
    <location>
        <position position="290"/>
    </location>
    <ligand>
        <name>S-adenosyl-L-methionine</name>
        <dbReference type="ChEBI" id="CHEBI:59789"/>
    </ligand>
</feature>
<feature type="binding site" evidence="3">
    <location>
        <position position="319"/>
    </location>
    <ligand>
        <name>S-adenosyl-L-methionine</name>
        <dbReference type="ChEBI" id="CHEBI:59789"/>
    </ligand>
</feature>
<feature type="binding site" evidence="3">
    <location>
        <position position="340"/>
    </location>
    <ligand>
        <name>S-adenosyl-L-methionine</name>
        <dbReference type="ChEBI" id="CHEBI:59789"/>
    </ligand>
</feature>
<feature type="binding site" evidence="3">
    <location>
        <position position="388"/>
    </location>
    <ligand>
        <name>S-adenosyl-L-methionine</name>
        <dbReference type="ChEBI" id="CHEBI:59789"/>
    </ligand>
</feature>
<organism>
    <name type="scientific">Listeria monocytogenes serotype 4b (strain F2365)</name>
    <dbReference type="NCBI Taxonomy" id="265669"/>
    <lineage>
        <taxon>Bacteria</taxon>
        <taxon>Bacillati</taxon>
        <taxon>Bacillota</taxon>
        <taxon>Bacilli</taxon>
        <taxon>Bacillales</taxon>
        <taxon>Listeriaceae</taxon>
        <taxon>Listeria</taxon>
    </lineage>
</organism>
<keyword id="KW-0004">4Fe-4S</keyword>
<keyword id="KW-0408">Iron</keyword>
<keyword id="KW-0411">Iron-sulfur</keyword>
<keyword id="KW-0479">Metal-binding</keyword>
<keyword id="KW-0489">Methyltransferase</keyword>
<keyword id="KW-0949">S-adenosyl-L-methionine</keyword>
<keyword id="KW-0808">Transferase</keyword>
<protein>
    <recommendedName>
        <fullName>Uncharacterized RNA methyltransferase LMOf2365_1727</fullName>
        <ecNumber>2.1.1.-</ecNumber>
    </recommendedName>
</protein>
<comment type="similarity">
    <text evidence="3">Belongs to the class I-like SAM-binding methyltransferase superfamily. RNA M5U methyltransferase family.</text>
</comment>
<gene>
    <name type="ordered locus">LMOf2365_1727</name>
</gene>
<sequence length="459" mass="51311">MNQNPVEEGQKFPLTIRRMGINGEGIGYFKKAVVFVPGAITGEEVVVEAVKVRDRFTEAKLNKIRKKSPNRVTAPCPVYEACGGCQLQHVAYSAQLELKRDIVIQSIEKHTKIDPTKLKIRPTIGMEDPWRYRNKSQFQTRMVGSGQVETGLFGANSHQLVPIEDCIVQQPVTIKVTNFVRDLLEKYGVPIYDEKAGSGIVRTIVVRTGVKTGETQLVFITNSKKLPKKREMLAEIEAALPEVTSIMQNVNQAKSSLIFGDETFLLAGKESIEEKLMELEFDLSARAFFQLNPFQTERLYQEVEKALVLTGSETLVDAYCGVGTIGQAFAGKVKEVRGMDIIPESIEDAKRNAEKNGIENVYYEVGKAEDVLPKWVNEGFRPDAVIVDPPRSGCDQGLIKSLLDVEAKQLVYVSCNPSTLARDLALLAKKYRIRYMQPVDMFPQTAHVETVVLLQLKDK</sequence>
<evidence type="ECO:0000250" key="1"/>
<evidence type="ECO:0000255" key="2">
    <source>
        <dbReference type="PROSITE-ProRule" id="PRU00208"/>
    </source>
</evidence>
<evidence type="ECO:0000255" key="3">
    <source>
        <dbReference type="PROSITE-ProRule" id="PRU01024"/>
    </source>
</evidence>
<dbReference type="EC" id="2.1.1.-"/>
<dbReference type="EMBL" id="AE017262">
    <property type="protein sequence ID" value="AAT04500.1"/>
    <property type="molecule type" value="Genomic_DNA"/>
</dbReference>
<dbReference type="SMR" id="Q71YW4"/>
<dbReference type="KEGG" id="lmf:LMOf2365_1727"/>
<dbReference type="HOGENOM" id="CLU_014689_7_1_9"/>
<dbReference type="GO" id="GO:0051539">
    <property type="term" value="F:4 iron, 4 sulfur cluster binding"/>
    <property type="evidence" value="ECO:0007669"/>
    <property type="project" value="UniProtKB-KW"/>
</dbReference>
<dbReference type="GO" id="GO:0046872">
    <property type="term" value="F:metal ion binding"/>
    <property type="evidence" value="ECO:0007669"/>
    <property type="project" value="UniProtKB-KW"/>
</dbReference>
<dbReference type="GO" id="GO:0070041">
    <property type="term" value="F:rRNA (uridine-C5-)-methyltransferase activity"/>
    <property type="evidence" value="ECO:0007669"/>
    <property type="project" value="TreeGrafter"/>
</dbReference>
<dbReference type="GO" id="GO:0070475">
    <property type="term" value="P:rRNA base methylation"/>
    <property type="evidence" value="ECO:0007669"/>
    <property type="project" value="TreeGrafter"/>
</dbReference>
<dbReference type="CDD" id="cd02440">
    <property type="entry name" value="AdoMet_MTases"/>
    <property type="match status" value="1"/>
</dbReference>
<dbReference type="FunFam" id="3.40.50.150:FF:000009">
    <property type="entry name" value="23S rRNA (Uracil(1939)-C(5))-methyltransferase RlmD"/>
    <property type="match status" value="1"/>
</dbReference>
<dbReference type="FunFam" id="2.40.50.140:FF:000097">
    <property type="entry name" value="23S rRNA (uracil(1939)-C(5))-methyltransferase RlmD"/>
    <property type="match status" value="1"/>
</dbReference>
<dbReference type="FunFam" id="2.40.50.1070:FF:000003">
    <property type="entry name" value="23S rRNA (Uracil-5-)-methyltransferase RumA"/>
    <property type="match status" value="1"/>
</dbReference>
<dbReference type="Gene3D" id="2.40.50.1070">
    <property type="match status" value="1"/>
</dbReference>
<dbReference type="Gene3D" id="2.40.50.140">
    <property type="entry name" value="Nucleic acid-binding proteins"/>
    <property type="match status" value="1"/>
</dbReference>
<dbReference type="Gene3D" id="3.40.50.150">
    <property type="entry name" value="Vaccinia Virus protein VP39"/>
    <property type="match status" value="1"/>
</dbReference>
<dbReference type="InterPro" id="IPR030390">
    <property type="entry name" value="MeTrfase_TrmA_AS"/>
</dbReference>
<dbReference type="InterPro" id="IPR030391">
    <property type="entry name" value="MeTrfase_TrmA_CS"/>
</dbReference>
<dbReference type="InterPro" id="IPR012340">
    <property type="entry name" value="NA-bd_OB-fold"/>
</dbReference>
<dbReference type="InterPro" id="IPR029063">
    <property type="entry name" value="SAM-dependent_MTases_sf"/>
</dbReference>
<dbReference type="InterPro" id="IPR002792">
    <property type="entry name" value="TRAM_dom"/>
</dbReference>
<dbReference type="InterPro" id="IPR010280">
    <property type="entry name" value="U5_MeTrfase_fam"/>
</dbReference>
<dbReference type="NCBIfam" id="TIGR00479">
    <property type="entry name" value="rumA"/>
    <property type="match status" value="1"/>
</dbReference>
<dbReference type="PANTHER" id="PTHR11061:SF45">
    <property type="match status" value="1"/>
</dbReference>
<dbReference type="PANTHER" id="PTHR11061">
    <property type="entry name" value="RNA M5U METHYLTRANSFERASE"/>
    <property type="match status" value="1"/>
</dbReference>
<dbReference type="Pfam" id="PF01938">
    <property type="entry name" value="TRAM"/>
    <property type="match status" value="1"/>
</dbReference>
<dbReference type="Pfam" id="PF05958">
    <property type="entry name" value="tRNA_U5-meth_tr"/>
    <property type="match status" value="1"/>
</dbReference>
<dbReference type="SUPFAM" id="SSF50249">
    <property type="entry name" value="Nucleic acid-binding proteins"/>
    <property type="match status" value="1"/>
</dbReference>
<dbReference type="SUPFAM" id="SSF53335">
    <property type="entry name" value="S-adenosyl-L-methionine-dependent methyltransferases"/>
    <property type="match status" value="1"/>
</dbReference>
<dbReference type="PROSITE" id="PS51687">
    <property type="entry name" value="SAM_MT_RNA_M5U"/>
    <property type="match status" value="1"/>
</dbReference>
<dbReference type="PROSITE" id="PS50926">
    <property type="entry name" value="TRAM"/>
    <property type="match status" value="1"/>
</dbReference>
<dbReference type="PROSITE" id="PS01230">
    <property type="entry name" value="TRMA_1"/>
    <property type="match status" value="1"/>
</dbReference>
<dbReference type="PROSITE" id="PS01231">
    <property type="entry name" value="TRMA_2"/>
    <property type="match status" value="1"/>
</dbReference>
<name>Y1727_LISMF</name>
<accession>Q71YW4</accession>
<reference key="1">
    <citation type="journal article" date="2004" name="Nucleic Acids Res.">
        <title>Whole genome comparisons of serotype 4b and 1/2a strains of the food-borne pathogen Listeria monocytogenes reveal new insights into the core genome components of this species.</title>
        <authorList>
            <person name="Nelson K.E."/>
            <person name="Fouts D.E."/>
            <person name="Mongodin E.F."/>
            <person name="Ravel J."/>
            <person name="DeBoy R.T."/>
            <person name="Kolonay J.F."/>
            <person name="Rasko D.A."/>
            <person name="Angiuoli S.V."/>
            <person name="Gill S.R."/>
            <person name="Paulsen I.T."/>
            <person name="Peterson J.D."/>
            <person name="White O."/>
            <person name="Nelson W.C."/>
            <person name="Nierman W.C."/>
            <person name="Beanan M.J."/>
            <person name="Brinkac L.M."/>
            <person name="Daugherty S.C."/>
            <person name="Dodson R.J."/>
            <person name="Durkin A.S."/>
            <person name="Madupu R."/>
            <person name="Haft D.H."/>
            <person name="Selengut J."/>
            <person name="Van Aken S.E."/>
            <person name="Khouri H.M."/>
            <person name="Fedorova N."/>
            <person name="Forberger H.A."/>
            <person name="Tran B."/>
            <person name="Kathariou S."/>
            <person name="Wonderling L.D."/>
            <person name="Uhlich G.A."/>
            <person name="Bayles D.O."/>
            <person name="Luchansky J.B."/>
            <person name="Fraser C.M."/>
        </authorList>
    </citation>
    <scope>NUCLEOTIDE SEQUENCE [LARGE SCALE GENOMIC DNA]</scope>
    <source>
        <strain>F2365</strain>
    </source>
</reference>
<proteinExistence type="inferred from homology"/>